<feature type="chain" id="PRO_1000005227" description="Small ribosomal subunit protein bS6">
    <location>
        <begin position="1"/>
        <end position="124"/>
    </location>
</feature>
<feature type="region of interest" description="Disordered" evidence="2">
    <location>
        <begin position="96"/>
        <end position="124"/>
    </location>
</feature>
<feature type="compositionally biased region" description="Low complexity" evidence="2">
    <location>
        <begin position="114"/>
        <end position="124"/>
    </location>
</feature>
<protein>
    <recommendedName>
        <fullName evidence="1">Small ribosomal subunit protein bS6</fullName>
    </recommendedName>
    <alternativeName>
        <fullName evidence="3">30S ribosomal protein S6</fullName>
    </alternativeName>
</protein>
<gene>
    <name evidence="1" type="primary">rpsF</name>
    <name type="ordered locus">Bcen2424_1874</name>
</gene>
<keyword id="KW-0687">Ribonucleoprotein</keyword>
<keyword id="KW-0689">Ribosomal protein</keyword>
<keyword id="KW-0694">RNA-binding</keyword>
<keyword id="KW-0699">rRNA-binding</keyword>
<dbReference type="EMBL" id="CP000458">
    <property type="protein sequence ID" value="ABK08625.1"/>
    <property type="molecule type" value="Genomic_DNA"/>
</dbReference>
<dbReference type="RefSeq" id="WP_011549648.1">
    <property type="nucleotide sequence ID" value="NC_008542.1"/>
</dbReference>
<dbReference type="SMR" id="A0K7Z8"/>
<dbReference type="KEGG" id="bch:Bcen2424_1874"/>
<dbReference type="HOGENOM" id="CLU_113441_6_1_4"/>
<dbReference type="GO" id="GO:0022627">
    <property type="term" value="C:cytosolic small ribosomal subunit"/>
    <property type="evidence" value="ECO:0007669"/>
    <property type="project" value="TreeGrafter"/>
</dbReference>
<dbReference type="GO" id="GO:0070181">
    <property type="term" value="F:small ribosomal subunit rRNA binding"/>
    <property type="evidence" value="ECO:0007669"/>
    <property type="project" value="TreeGrafter"/>
</dbReference>
<dbReference type="GO" id="GO:0003735">
    <property type="term" value="F:structural constituent of ribosome"/>
    <property type="evidence" value="ECO:0007669"/>
    <property type="project" value="InterPro"/>
</dbReference>
<dbReference type="GO" id="GO:0006412">
    <property type="term" value="P:translation"/>
    <property type="evidence" value="ECO:0007669"/>
    <property type="project" value="UniProtKB-UniRule"/>
</dbReference>
<dbReference type="CDD" id="cd00473">
    <property type="entry name" value="bS6"/>
    <property type="match status" value="1"/>
</dbReference>
<dbReference type="Gene3D" id="3.30.70.60">
    <property type="match status" value="1"/>
</dbReference>
<dbReference type="HAMAP" id="MF_00360">
    <property type="entry name" value="Ribosomal_bS6"/>
    <property type="match status" value="1"/>
</dbReference>
<dbReference type="InterPro" id="IPR000529">
    <property type="entry name" value="Ribosomal_bS6"/>
</dbReference>
<dbReference type="InterPro" id="IPR035980">
    <property type="entry name" value="Ribosomal_bS6_sf"/>
</dbReference>
<dbReference type="InterPro" id="IPR020814">
    <property type="entry name" value="Ribosomal_S6_plastid/chlpt"/>
</dbReference>
<dbReference type="InterPro" id="IPR014717">
    <property type="entry name" value="Transl_elong_EF1B/ribsomal_bS6"/>
</dbReference>
<dbReference type="NCBIfam" id="TIGR00166">
    <property type="entry name" value="S6"/>
    <property type="match status" value="1"/>
</dbReference>
<dbReference type="PANTHER" id="PTHR21011">
    <property type="entry name" value="MITOCHONDRIAL 28S RIBOSOMAL PROTEIN S6"/>
    <property type="match status" value="1"/>
</dbReference>
<dbReference type="PANTHER" id="PTHR21011:SF1">
    <property type="entry name" value="SMALL RIBOSOMAL SUBUNIT PROTEIN BS6M"/>
    <property type="match status" value="1"/>
</dbReference>
<dbReference type="Pfam" id="PF01250">
    <property type="entry name" value="Ribosomal_S6"/>
    <property type="match status" value="1"/>
</dbReference>
<dbReference type="SUPFAM" id="SSF54995">
    <property type="entry name" value="Ribosomal protein S6"/>
    <property type="match status" value="1"/>
</dbReference>
<comment type="function">
    <text evidence="1">Binds together with bS18 to 16S ribosomal RNA.</text>
</comment>
<comment type="similarity">
    <text evidence="1">Belongs to the bacterial ribosomal protein bS6 family.</text>
</comment>
<evidence type="ECO:0000255" key="1">
    <source>
        <dbReference type="HAMAP-Rule" id="MF_00360"/>
    </source>
</evidence>
<evidence type="ECO:0000256" key="2">
    <source>
        <dbReference type="SAM" id="MobiDB-lite"/>
    </source>
</evidence>
<evidence type="ECO:0000305" key="3"/>
<organism>
    <name type="scientific">Burkholderia cenocepacia (strain HI2424)</name>
    <dbReference type="NCBI Taxonomy" id="331272"/>
    <lineage>
        <taxon>Bacteria</taxon>
        <taxon>Pseudomonadati</taxon>
        <taxon>Pseudomonadota</taxon>
        <taxon>Betaproteobacteria</taxon>
        <taxon>Burkholderiales</taxon>
        <taxon>Burkholderiaceae</taxon>
        <taxon>Burkholderia</taxon>
        <taxon>Burkholderia cepacia complex</taxon>
    </lineage>
</organism>
<name>RS6_BURCH</name>
<reference key="1">
    <citation type="submission" date="2006-08" db="EMBL/GenBank/DDBJ databases">
        <title>Complete sequence of chromosome 1 of Burkholderia cenocepacia HI2424.</title>
        <authorList>
            <person name="Copeland A."/>
            <person name="Lucas S."/>
            <person name="Lapidus A."/>
            <person name="Barry K."/>
            <person name="Detter J.C."/>
            <person name="Glavina del Rio T."/>
            <person name="Hammon N."/>
            <person name="Israni S."/>
            <person name="Pitluck S."/>
            <person name="Chain P."/>
            <person name="Malfatti S."/>
            <person name="Shin M."/>
            <person name="Vergez L."/>
            <person name="Schmutz J."/>
            <person name="Larimer F."/>
            <person name="Land M."/>
            <person name="Hauser L."/>
            <person name="Kyrpides N."/>
            <person name="Kim E."/>
            <person name="LiPuma J.J."/>
            <person name="Gonzalez C.F."/>
            <person name="Konstantinidis K."/>
            <person name="Tiedje J.M."/>
            <person name="Richardson P."/>
        </authorList>
    </citation>
    <scope>NUCLEOTIDE SEQUENCE [LARGE SCALE GENOMIC DNA]</scope>
    <source>
        <strain>HI2424</strain>
    </source>
</reference>
<proteinExistence type="inferred from homology"/>
<sequence length="124" mass="14304">MRHYEIVFIVHPDQSEQVPAMIERYKTTITTHGGQIHRVEDWGRRQLAYMIEKLAKAHYVCMNIECDQTTLDELEHAFKFNDAVLRHLIVKMKKAETGPSPMMKEVQREEAKKAAAAQPAEAQA</sequence>
<accession>A0K7Z8</accession>